<evidence type="ECO:0000250" key="1"/>
<evidence type="ECO:0000255" key="2"/>
<evidence type="ECO:0000255" key="3">
    <source>
        <dbReference type="PROSITE-ProRule" id="PRU00448"/>
    </source>
</evidence>
<evidence type="ECO:0000305" key="4"/>
<proteinExistence type="evidence at transcript level"/>
<comment type="function">
    <text evidence="1">May be involved in the calcium-dependent regulation of rhodopsin phosphorylation. Binds three calcium ions (By similarity).</text>
</comment>
<comment type="similarity">
    <text evidence="4">Belongs to the recoverin family.</text>
</comment>
<gene>
    <name type="primary">ncald</name>
</gene>
<accession>Q7SY75</accession>
<keyword id="KW-0106">Calcium</keyword>
<keyword id="KW-0449">Lipoprotein</keyword>
<keyword id="KW-0479">Metal-binding</keyword>
<keyword id="KW-0519">Myristate</keyword>
<keyword id="KW-1185">Reference proteome</keyword>
<keyword id="KW-0677">Repeat</keyword>
<dbReference type="EMBL" id="BC054982">
    <property type="protein sequence ID" value="AAH54982.1"/>
    <property type="molecule type" value="mRNA"/>
</dbReference>
<dbReference type="RefSeq" id="NP_001080751.1">
    <property type="nucleotide sequence ID" value="NM_001087282.1"/>
</dbReference>
<dbReference type="SMR" id="Q7SY75"/>
<dbReference type="DNASU" id="380443"/>
<dbReference type="GeneID" id="380443"/>
<dbReference type="KEGG" id="xla:380443"/>
<dbReference type="AGR" id="Xenbase:XB-GENE-6078000"/>
<dbReference type="CTD" id="380443"/>
<dbReference type="Xenbase" id="XB-GENE-6078000">
    <property type="gene designation" value="ncald.L"/>
</dbReference>
<dbReference type="OrthoDB" id="191686at2759"/>
<dbReference type="Proteomes" id="UP000186698">
    <property type="component" value="Chromosome 6L"/>
</dbReference>
<dbReference type="Bgee" id="380443">
    <property type="expression patterns" value="Expressed in brain and 19 other cell types or tissues"/>
</dbReference>
<dbReference type="GO" id="GO:0003779">
    <property type="term" value="F:actin binding"/>
    <property type="evidence" value="ECO:0000318"/>
    <property type="project" value="GO_Central"/>
</dbReference>
<dbReference type="GO" id="GO:0005509">
    <property type="term" value="F:calcium ion binding"/>
    <property type="evidence" value="ECO:0000318"/>
    <property type="project" value="GO_Central"/>
</dbReference>
<dbReference type="GO" id="GO:0015631">
    <property type="term" value="F:tubulin binding"/>
    <property type="evidence" value="ECO:0000318"/>
    <property type="project" value="GO_Central"/>
</dbReference>
<dbReference type="GO" id="GO:0019722">
    <property type="term" value="P:calcium-mediated signaling"/>
    <property type="evidence" value="ECO:0000318"/>
    <property type="project" value="GO_Central"/>
</dbReference>
<dbReference type="GO" id="GO:0009966">
    <property type="term" value="P:regulation of signal transduction"/>
    <property type="evidence" value="ECO:0000318"/>
    <property type="project" value="GO_Central"/>
</dbReference>
<dbReference type="CDD" id="cd00051">
    <property type="entry name" value="EFh"/>
    <property type="match status" value="2"/>
</dbReference>
<dbReference type="FunFam" id="1.10.238.10:FF:000009">
    <property type="entry name" value="Visinin-like protein 1"/>
    <property type="match status" value="1"/>
</dbReference>
<dbReference type="Gene3D" id="1.10.238.10">
    <property type="entry name" value="EF-hand"/>
    <property type="match status" value="1"/>
</dbReference>
<dbReference type="InterPro" id="IPR011992">
    <property type="entry name" value="EF-hand-dom_pair"/>
</dbReference>
<dbReference type="InterPro" id="IPR018247">
    <property type="entry name" value="EF_Hand_1_Ca_BS"/>
</dbReference>
<dbReference type="InterPro" id="IPR002048">
    <property type="entry name" value="EF_hand_dom"/>
</dbReference>
<dbReference type="InterPro" id="IPR028846">
    <property type="entry name" value="Recoverin"/>
</dbReference>
<dbReference type="PANTHER" id="PTHR23055">
    <property type="entry name" value="CALCIUM BINDING PROTEINS"/>
    <property type="match status" value="1"/>
</dbReference>
<dbReference type="PANTHER" id="PTHR23055:SF87">
    <property type="entry name" value="NEUROCALCIN-DELTA"/>
    <property type="match status" value="1"/>
</dbReference>
<dbReference type="Pfam" id="PF00036">
    <property type="entry name" value="EF-hand_1"/>
    <property type="match status" value="1"/>
</dbReference>
<dbReference type="Pfam" id="PF13499">
    <property type="entry name" value="EF-hand_7"/>
    <property type="match status" value="1"/>
</dbReference>
<dbReference type="PRINTS" id="PR00450">
    <property type="entry name" value="RECOVERIN"/>
</dbReference>
<dbReference type="SMART" id="SM00054">
    <property type="entry name" value="EFh"/>
    <property type="match status" value="3"/>
</dbReference>
<dbReference type="SUPFAM" id="SSF47473">
    <property type="entry name" value="EF-hand"/>
    <property type="match status" value="1"/>
</dbReference>
<dbReference type="PROSITE" id="PS00018">
    <property type="entry name" value="EF_HAND_1"/>
    <property type="match status" value="3"/>
</dbReference>
<dbReference type="PROSITE" id="PS50222">
    <property type="entry name" value="EF_HAND_2"/>
    <property type="match status" value="3"/>
</dbReference>
<protein>
    <recommendedName>
        <fullName>Neurocalcin-delta</fullName>
    </recommendedName>
</protein>
<organism>
    <name type="scientific">Xenopus laevis</name>
    <name type="common">African clawed frog</name>
    <dbReference type="NCBI Taxonomy" id="8355"/>
    <lineage>
        <taxon>Eukaryota</taxon>
        <taxon>Metazoa</taxon>
        <taxon>Chordata</taxon>
        <taxon>Craniata</taxon>
        <taxon>Vertebrata</taxon>
        <taxon>Euteleostomi</taxon>
        <taxon>Amphibia</taxon>
        <taxon>Batrachia</taxon>
        <taxon>Anura</taxon>
        <taxon>Pipoidea</taxon>
        <taxon>Pipidae</taxon>
        <taxon>Xenopodinae</taxon>
        <taxon>Xenopus</taxon>
        <taxon>Xenopus</taxon>
    </lineage>
</organism>
<name>NCALD_XENLA</name>
<reference key="1">
    <citation type="submission" date="2003-07" db="EMBL/GenBank/DDBJ databases">
        <authorList>
            <consortium name="NIH - Xenopus Gene Collection (XGC) project"/>
        </authorList>
    </citation>
    <scope>NUCLEOTIDE SEQUENCE [LARGE SCALE MRNA]</scope>
    <source>
        <tissue>Tadpole</tissue>
    </source>
</reference>
<sequence>MGKQNSKLRPEVMQDLLESTDFTEHEIQEWYKGFLRDCPSGNLTMEEFKKIYGNFFPYGDASKFAEHVFRTFDANGDGTIDFREFIIALSVTSRGKLEQKLKWAFSMYDLDGNGYISKAEMLEIVQAIYKMVSSVMKMPEDESTPEKRTEKIFRQMDTNRDGKLSLEEFIRGAKSDPSIVRLLQCDPSSAGRF</sequence>
<feature type="initiator methionine" description="Removed" evidence="2">
    <location>
        <position position="1"/>
    </location>
</feature>
<feature type="chain" id="PRO_0000362082" description="Neurocalcin-delta">
    <location>
        <begin position="2"/>
        <end position="193"/>
    </location>
</feature>
<feature type="domain" description="EF-hand 1" evidence="3">
    <location>
        <begin position="60"/>
        <end position="95"/>
    </location>
</feature>
<feature type="domain" description="EF-hand 2" evidence="3">
    <location>
        <begin position="96"/>
        <end position="131"/>
    </location>
</feature>
<feature type="domain" description="EF-hand 3" evidence="3">
    <location>
        <begin position="144"/>
        <end position="179"/>
    </location>
</feature>
<feature type="binding site" evidence="3">
    <location>
        <position position="73"/>
    </location>
    <ligand>
        <name>Ca(2+)</name>
        <dbReference type="ChEBI" id="CHEBI:29108"/>
        <label>1</label>
    </ligand>
</feature>
<feature type="binding site" evidence="3">
    <location>
        <position position="75"/>
    </location>
    <ligand>
        <name>Ca(2+)</name>
        <dbReference type="ChEBI" id="CHEBI:29108"/>
        <label>1</label>
    </ligand>
</feature>
<feature type="binding site" evidence="3">
    <location>
        <position position="77"/>
    </location>
    <ligand>
        <name>Ca(2+)</name>
        <dbReference type="ChEBI" id="CHEBI:29108"/>
        <label>1</label>
    </ligand>
</feature>
<feature type="binding site" evidence="3">
    <location>
        <position position="79"/>
    </location>
    <ligand>
        <name>Ca(2+)</name>
        <dbReference type="ChEBI" id="CHEBI:29108"/>
        <label>1</label>
    </ligand>
</feature>
<feature type="binding site" evidence="3">
    <location>
        <position position="84"/>
    </location>
    <ligand>
        <name>Ca(2+)</name>
        <dbReference type="ChEBI" id="CHEBI:29108"/>
        <label>1</label>
    </ligand>
</feature>
<feature type="binding site" evidence="3">
    <location>
        <position position="109"/>
    </location>
    <ligand>
        <name>Ca(2+)</name>
        <dbReference type="ChEBI" id="CHEBI:29108"/>
        <label>2</label>
    </ligand>
</feature>
<feature type="binding site" evidence="3">
    <location>
        <position position="111"/>
    </location>
    <ligand>
        <name>Ca(2+)</name>
        <dbReference type="ChEBI" id="CHEBI:29108"/>
        <label>2</label>
    </ligand>
</feature>
<feature type="binding site" evidence="3">
    <location>
        <position position="113"/>
    </location>
    <ligand>
        <name>Ca(2+)</name>
        <dbReference type="ChEBI" id="CHEBI:29108"/>
        <label>2</label>
    </ligand>
</feature>
<feature type="binding site" evidence="3">
    <location>
        <position position="115"/>
    </location>
    <ligand>
        <name>Ca(2+)</name>
        <dbReference type="ChEBI" id="CHEBI:29108"/>
        <label>2</label>
    </ligand>
</feature>
<feature type="binding site" evidence="3">
    <location>
        <position position="120"/>
    </location>
    <ligand>
        <name>Ca(2+)</name>
        <dbReference type="ChEBI" id="CHEBI:29108"/>
        <label>2</label>
    </ligand>
</feature>
<feature type="binding site" evidence="3">
    <location>
        <position position="157"/>
    </location>
    <ligand>
        <name>Ca(2+)</name>
        <dbReference type="ChEBI" id="CHEBI:29108"/>
        <label>3</label>
    </ligand>
</feature>
<feature type="binding site" evidence="3">
    <location>
        <position position="159"/>
    </location>
    <ligand>
        <name>Ca(2+)</name>
        <dbReference type="ChEBI" id="CHEBI:29108"/>
        <label>3</label>
    </ligand>
</feature>
<feature type="binding site" evidence="3">
    <location>
        <position position="161"/>
    </location>
    <ligand>
        <name>Ca(2+)</name>
        <dbReference type="ChEBI" id="CHEBI:29108"/>
        <label>3</label>
    </ligand>
</feature>
<feature type="binding site" evidence="3">
    <location>
        <position position="163"/>
    </location>
    <ligand>
        <name>Ca(2+)</name>
        <dbReference type="ChEBI" id="CHEBI:29108"/>
        <label>3</label>
    </ligand>
</feature>
<feature type="binding site" evidence="3">
    <location>
        <position position="168"/>
    </location>
    <ligand>
        <name>Ca(2+)</name>
        <dbReference type="ChEBI" id="CHEBI:29108"/>
        <label>3</label>
    </ligand>
</feature>
<feature type="lipid moiety-binding region" description="N-myristoyl glycine" evidence="2">
    <location>
        <position position="2"/>
    </location>
</feature>